<keyword id="KW-0145">Chemotaxis</keyword>
<keyword id="KW-0963">Cytoplasm</keyword>
<keyword id="KW-0378">Hydrolase</keyword>
<keyword id="KW-0597">Phosphoprotein</keyword>
<proteinExistence type="inferred from homology"/>
<gene>
    <name evidence="1" type="primary">cheB2</name>
    <name type="ordered locus">Shewmr4_2088</name>
</gene>
<protein>
    <recommendedName>
        <fullName evidence="1">Protein-glutamate methylesterase/protein-glutamine glutaminase 2</fullName>
        <ecNumber evidence="1">3.1.1.61</ecNumber>
        <ecNumber evidence="1">3.5.1.44</ecNumber>
    </recommendedName>
</protein>
<dbReference type="EC" id="3.1.1.61" evidence="1"/>
<dbReference type="EC" id="3.5.1.44" evidence="1"/>
<dbReference type="EMBL" id="CP000446">
    <property type="protein sequence ID" value="ABI39161.1"/>
    <property type="molecule type" value="Genomic_DNA"/>
</dbReference>
<dbReference type="RefSeq" id="WP_011622851.1">
    <property type="nucleotide sequence ID" value="NC_008321.1"/>
</dbReference>
<dbReference type="SMR" id="Q0HIF6"/>
<dbReference type="KEGG" id="she:Shewmr4_2088"/>
<dbReference type="HOGENOM" id="CLU_000445_51_0_6"/>
<dbReference type="GO" id="GO:0005737">
    <property type="term" value="C:cytoplasm"/>
    <property type="evidence" value="ECO:0007669"/>
    <property type="project" value="UniProtKB-SubCell"/>
</dbReference>
<dbReference type="GO" id="GO:0000156">
    <property type="term" value="F:phosphorelay response regulator activity"/>
    <property type="evidence" value="ECO:0007669"/>
    <property type="project" value="InterPro"/>
</dbReference>
<dbReference type="GO" id="GO:0008984">
    <property type="term" value="F:protein-glutamate methylesterase activity"/>
    <property type="evidence" value="ECO:0007669"/>
    <property type="project" value="UniProtKB-UniRule"/>
</dbReference>
<dbReference type="GO" id="GO:0050568">
    <property type="term" value="F:protein-glutamine glutaminase activity"/>
    <property type="evidence" value="ECO:0007669"/>
    <property type="project" value="UniProtKB-UniRule"/>
</dbReference>
<dbReference type="GO" id="GO:0006935">
    <property type="term" value="P:chemotaxis"/>
    <property type="evidence" value="ECO:0007669"/>
    <property type="project" value="UniProtKB-UniRule"/>
</dbReference>
<dbReference type="CDD" id="cd16432">
    <property type="entry name" value="CheB_Rec"/>
    <property type="match status" value="1"/>
</dbReference>
<dbReference type="CDD" id="cd17541">
    <property type="entry name" value="REC_CheB-like"/>
    <property type="match status" value="1"/>
</dbReference>
<dbReference type="Gene3D" id="3.40.50.2300">
    <property type="match status" value="1"/>
</dbReference>
<dbReference type="Gene3D" id="3.40.50.180">
    <property type="entry name" value="Methylesterase CheB, C-terminal domain"/>
    <property type="match status" value="1"/>
</dbReference>
<dbReference type="HAMAP" id="MF_00099">
    <property type="entry name" value="CheB_chemtxs"/>
    <property type="match status" value="1"/>
</dbReference>
<dbReference type="InterPro" id="IPR008248">
    <property type="entry name" value="CheB-like"/>
</dbReference>
<dbReference type="InterPro" id="IPR035909">
    <property type="entry name" value="CheB_C"/>
</dbReference>
<dbReference type="InterPro" id="IPR011006">
    <property type="entry name" value="CheY-like_superfamily"/>
</dbReference>
<dbReference type="InterPro" id="IPR000673">
    <property type="entry name" value="Sig_transdc_resp-reg_Me-estase"/>
</dbReference>
<dbReference type="InterPro" id="IPR001789">
    <property type="entry name" value="Sig_transdc_resp-reg_receiver"/>
</dbReference>
<dbReference type="NCBIfam" id="NF001965">
    <property type="entry name" value="PRK00742.1"/>
    <property type="match status" value="1"/>
</dbReference>
<dbReference type="NCBIfam" id="NF009206">
    <property type="entry name" value="PRK12555.1"/>
    <property type="match status" value="1"/>
</dbReference>
<dbReference type="PANTHER" id="PTHR42872">
    <property type="entry name" value="PROTEIN-GLUTAMATE METHYLESTERASE/PROTEIN-GLUTAMINE GLUTAMINASE"/>
    <property type="match status" value="1"/>
</dbReference>
<dbReference type="PANTHER" id="PTHR42872:SF6">
    <property type="entry name" value="PROTEIN-GLUTAMATE METHYLESTERASE_PROTEIN-GLUTAMINE GLUTAMINASE"/>
    <property type="match status" value="1"/>
</dbReference>
<dbReference type="Pfam" id="PF01339">
    <property type="entry name" value="CheB_methylest"/>
    <property type="match status" value="1"/>
</dbReference>
<dbReference type="Pfam" id="PF00072">
    <property type="entry name" value="Response_reg"/>
    <property type="match status" value="1"/>
</dbReference>
<dbReference type="PIRSF" id="PIRSF000876">
    <property type="entry name" value="RR_chemtxs_CheB"/>
    <property type="match status" value="1"/>
</dbReference>
<dbReference type="SMART" id="SM00448">
    <property type="entry name" value="REC"/>
    <property type="match status" value="1"/>
</dbReference>
<dbReference type="SUPFAM" id="SSF52172">
    <property type="entry name" value="CheY-like"/>
    <property type="match status" value="1"/>
</dbReference>
<dbReference type="SUPFAM" id="SSF52738">
    <property type="entry name" value="Methylesterase CheB, C-terminal domain"/>
    <property type="match status" value="1"/>
</dbReference>
<dbReference type="PROSITE" id="PS50122">
    <property type="entry name" value="CHEB"/>
    <property type="match status" value="1"/>
</dbReference>
<dbReference type="PROSITE" id="PS50110">
    <property type="entry name" value="RESPONSE_REGULATORY"/>
    <property type="match status" value="1"/>
</dbReference>
<evidence type="ECO:0000255" key="1">
    <source>
        <dbReference type="HAMAP-Rule" id="MF_00099"/>
    </source>
</evidence>
<feature type="chain" id="PRO_0000264322" description="Protein-glutamate methylesterase/protein-glutamine glutaminase 2">
    <location>
        <begin position="1"/>
        <end position="351"/>
    </location>
</feature>
<feature type="domain" description="Response regulatory" evidence="1">
    <location>
        <begin position="4"/>
        <end position="121"/>
    </location>
</feature>
<feature type="domain" description="CheB-type methylesterase" evidence="1">
    <location>
        <begin position="156"/>
        <end position="348"/>
    </location>
</feature>
<feature type="active site" evidence="1">
    <location>
        <position position="168"/>
    </location>
</feature>
<feature type="active site" evidence="1">
    <location>
        <position position="194"/>
    </location>
</feature>
<feature type="active site" evidence="1">
    <location>
        <position position="290"/>
    </location>
</feature>
<feature type="modified residue" description="4-aspartylphosphate" evidence="1">
    <location>
        <position position="55"/>
    </location>
</feature>
<sequence length="351" mass="37878">MTIKVLVVDDSALIRNLLGQMIEADSELSLVGMAADAYMAKDMVNQHRPDVITLDIEMPKVDGLTFLDRLMKARPTAVVMISSLTEEGADATFNALALGAVDFIPKPKLDSPQDFNEYQDLILEKIKSAAHAKLKTQRAAPAVVVQPSHKPALSSRVINTQLVAIGASTGGTEAILSLLQQFPAVMPPIVITQHMPPGFTRTFAERLNKLTRLNVKQAEDGERLLPCYVYIAPGDQHLEVIKVGGSFKTRLTQGDKVSGHRPSVDVLFNSVAECAGANTTAAILTGMGKDGADGMALIDEQGGKTFAQGEQSCVVFGMPREAIKRGVIHHVVELPQLADKMLNYLASLKRD</sequence>
<reference key="1">
    <citation type="submission" date="2006-08" db="EMBL/GenBank/DDBJ databases">
        <title>Complete sequence of Shewanella sp. MR-4.</title>
        <authorList>
            <consortium name="US DOE Joint Genome Institute"/>
            <person name="Copeland A."/>
            <person name="Lucas S."/>
            <person name="Lapidus A."/>
            <person name="Barry K."/>
            <person name="Detter J.C."/>
            <person name="Glavina del Rio T."/>
            <person name="Hammon N."/>
            <person name="Israni S."/>
            <person name="Dalin E."/>
            <person name="Tice H."/>
            <person name="Pitluck S."/>
            <person name="Kiss H."/>
            <person name="Brettin T."/>
            <person name="Bruce D."/>
            <person name="Han C."/>
            <person name="Tapia R."/>
            <person name="Gilna P."/>
            <person name="Schmutz J."/>
            <person name="Larimer F."/>
            <person name="Land M."/>
            <person name="Hauser L."/>
            <person name="Kyrpides N."/>
            <person name="Mikhailova N."/>
            <person name="Nealson K."/>
            <person name="Konstantinidis K."/>
            <person name="Klappenbach J."/>
            <person name="Tiedje J."/>
            <person name="Richardson P."/>
        </authorList>
    </citation>
    <scope>NUCLEOTIDE SEQUENCE [LARGE SCALE GENOMIC DNA]</scope>
    <source>
        <strain>MR-4</strain>
    </source>
</reference>
<name>CHEB2_SHESM</name>
<comment type="function">
    <text evidence="1">Involved in chemotaxis. Part of a chemotaxis signal transduction system that modulates chemotaxis in response to various stimuli. Catalyzes the demethylation of specific methylglutamate residues introduced into the chemoreceptors (methyl-accepting chemotaxis proteins or MCP) by CheR. Also mediates the irreversible deamidation of specific glutamine residues to glutamic acid.</text>
</comment>
<comment type="catalytic activity">
    <reaction evidence="1">
        <text>[protein]-L-glutamate 5-O-methyl ester + H2O = L-glutamyl-[protein] + methanol + H(+)</text>
        <dbReference type="Rhea" id="RHEA:23236"/>
        <dbReference type="Rhea" id="RHEA-COMP:10208"/>
        <dbReference type="Rhea" id="RHEA-COMP:10311"/>
        <dbReference type="ChEBI" id="CHEBI:15377"/>
        <dbReference type="ChEBI" id="CHEBI:15378"/>
        <dbReference type="ChEBI" id="CHEBI:17790"/>
        <dbReference type="ChEBI" id="CHEBI:29973"/>
        <dbReference type="ChEBI" id="CHEBI:82795"/>
        <dbReference type="EC" id="3.1.1.61"/>
    </reaction>
</comment>
<comment type="catalytic activity">
    <reaction evidence="1">
        <text>L-glutaminyl-[protein] + H2O = L-glutamyl-[protein] + NH4(+)</text>
        <dbReference type="Rhea" id="RHEA:16441"/>
        <dbReference type="Rhea" id="RHEA-COMP:10207"/>
        <dbReference type="Rhea" id="RHEA-COMP:10208"/>
        <dbReference type="ChEBI" id="CHEBI:15377"/>
        <dbReference type="ChEBI" id="CHEBI:28938"/>
        <dbReference type="ChEBI" id="CHEBI:29973"/>
        <dbReference type="ChEBI" id="CHEBI:30011"/>
        <dbReference type="EC" id="3.5.1.44"/>
    </reaction>
</comment>
<comment type="subcellular location">
    <subcellularLocation>
        <location evidence="1">Cytoplasm</location>
    </subcellularLocation>
</comment>
<comment type="domain">
    <text evidence="1">Contains a C-terminal catalytic domain, and an N-terminal region which modulates catalytic activity.</text>
</comment>
<comment type="PTM">
    <text evidence="1">Phosphorylated by CheA. Phosphorylation of the N-terminal regulatory domain activates the methylesterase activity.</text>
</comment>
<comment type="similarity">
    <text evidence="1">Belongs to the CheB family.</text>
</comment>
<organism>
    <name type="scientific">Shewanella sp. (strain MR-4)</name>
    <dbReference type="NCBI Taxonomy" id="60480"/>
    <lineage>
        <taxon>Bacteria</taxon>
        <taxon>Pseudomonadati</taxon>
        <taxon>Pseudomonadota</taxon>
        <taxon>Gammaproteobacteria</taxon>
        <taxon>Alteromonadales</taxon>
        <taxon>Shewanellaceae</taxon>
        <taxon>Shewanella</taxon>
    </lineage>
</organism>
<accession>Q0HIF6</accession>